<evidence type="ECO:0000255" key="1">
    <source>
        <dbReference type="HAMAP-Rule" id="MF_01317"/>
    </source>
</evidence>
<comment type="function">
    <text evidence="1">One of the components of the core complex of photosystem II (PSII). PSII is a light-driven water:plastoquinone oxidoreductase that uses light energy to abstract electrons from H(2)O, generating O(2) and a proton gradient subsequently used for ATP formation. It consists of a core antenna complex that captures photons, and an electron transfer chain that converts photonic excitation into a charge separation. This subunit is found at the monomer-monomer interface and is required for correct PSII assembly and/or dimerization.</text>
</comment>
<comment type="subunit">
    <text evidence="1">PSII is composed of 1 copy each of membrane proteins PsbA, PsbB, PsbC, PsbD, PsbE, PsbF, PsbH, PsbI, PsbJ, PsbK, PsbL, PsbM, PsbT, PsbX, PsbY, PsbZ, Psb30/Ycf12, at least 3 peripheral proteins of the oxygen-evolving complex and a large number of cofactors. It forms dimeric complexes.</text>
</comment>
<comment type="subcellular location">
    <subcellularLocation>
        <location evidence="1">Plastid</location>
        <location evidence="1">Chloroplast thylakoid membrane</location>
        <topology evidence="1">Single-pass membrane protein</topology>
    </subcellularLocation>
</comment>
<comment type="similarity">
    <text evidence="1">Belongs to the PsbL family.</text>
</comment>
<accession>Q9MTK6</accession>
<reference key="1">
    <citation type="journal article" date="2000" name="Mol. Gen. Genet.">
        <title>Complete nucleotide sequence of the Oenothera elata plastid chromosome, representing plastome I of the five distinguishable Euoenothera plastomes.</title>
        <authorList>
            <person name="Hupfer H."/>
            <person name="Swiatek M."/>
            <person name="Hornung S."/>
            <person name="Herrmann R.G."/>
            <person name="Maier R.M."/>
            <person name="Chiu W.-L."/>
            <person name="Sears B."/>
        </authorList>
    </citation>
    <scope>NUCLEOTIDE SEQUENCE [LARGE SCALE GENOMIC DNA]</scope>
    <source>
        <strain>cv. Johansen</strain>
    </source>
</reference>
<gene>
    <name evidence="1" type="primary">psbL</name>
</gene>
<protein>
    <recommendedName>
        <fullName evidence="1">Photosystem II reaction center protein L</fullName>
        <shortName evidence="1">PSII-L</shortName>
    </recommendedName>
</protein>
<proteinExistence type="inferred from homology"/>
<sequence>MTQSNPNEQDVELNRTSLYWGLLLIFVLAVLFSNYFFN</sequence>
<dbReference type="EMBL" id="AJ271079">
    <property type="protein sequence ID" value="CAB67172.1"/>
    <property type="molecule type" value="Genomic_DNA"/>
</dbReference>
<dbReference type="RefSeq" id="NP_084707.1">
    <property type="nucleotide sequence ID" value="NC_002693.2"/>
</dbReference>
<dbReference type="SMR" id="Q9MTK6"/>
<dbReference type="GeneID" id="802708"/>
<dbReference type="GO" id="GO:0009535">
    <property type="term" value="C:chloroplast thylakoid membrane"/>
    <property type="evidence" value="ECO:0007669"/>
    <property type="project" value="UniProtKB-SubCell"/>
</dbReference>
<dbReference type="GO" id="GO:0009539">
    <property type="term" value="C:photosystem II reaction center"/>
    <property type="evidence" value="ECO:0007669"/>
    <property type="project" value="InterPro"/>
</dbReference>
<dbReference type="GO" id="GO:0015979">
    <property type="term" value="P:photosynthesis"/>
    <property type="evidence" value="ECO:0007669"/>
    <property type="project" value="UniProtKB-UniRule"/>
</dbReference>
<dbReference type="HAMAP" id="MF_01317">
    <property type="entry name" value="PSII_PsbL"/>
    <property type="match status" value="1"/>
</dbReference>
<dbReference type="InterPro" id="IPR003372">
    <property type="entry name" value="PSII_PsbL"/>
</dbReference>
<dbReference type="InterPro" id="IPR037266">
    <property type="entry name" value="PSII_PsbL_sf"/>
</dbReference>
<dbReference type="NCBIfam" id="NF001972">
    <property type="entry name" value="PRK00753.1"/>
    <property type="match status" value="1"/>
</dbReference>
<dbReference type="Pfam" id="PF02419">
    <property type="entry name" value="PsbL"/>
    <property type="match status" value="1"/>
</dbReference>
<dbReference type="SUPFAM" id="SSF161017">
    <property type="entry name" value="Photosystem II reaction center protein L, PsbL"/>
    <property type="match status" value="1"/>
</dbReference>
<organism>
    <name type="scientific">Oenothera elata subsp. hookeri</name>
    <name type="common">Hooker's evening primrose</name>
    <name type="synonym">Oenothera hookeri</name>
    <dbReference type="NCBI Taxonomy" id="85636"/>
    <lineage>
        <taxon>Eukaryota</taxon>
        <taxon>Viridiplantae</taxon>
        <taxon>Streptophyta</taxon>
        <taxon>Embryophyta</taxon>
        <taxon>Tracheophyta</taxon>
        <taxon>Spermatophyta</taxon>
        <taxon>Magnoliopsida</taxon>
        <taxon>eudicotyledons</taxon>
        <taxon>Gunneridae</taxon>
        <taxon>Pentapetalae</taxon>
        <taxon>rosids</taxon>
        <taxon>malvids</taxon>
        <taxon>Myrtales</taxon>
        <taxon>Onagraceae</taxon>
        <taxon>Onagroideae</taxon>
        <taxon>Onagreae</taxon>
        <taxon>Oenothera</taxon>
    </lineage>
</organism>
<geneLocation type="chloroplast"/>
<name>PSBL_OENEH</name>
<feature type="chain" id="PRO_0000219752" description="Photosystem II reaction center protein L">
    <location>
        <begin position="1"/>
        <end position="38"/>
    </location>
</feature>
<feature type="transmembrane region" description="Helical" evidence="1">
    <location>
        <begin position="17"/>
        <end position="37"/>
    </location>
</feature>
<keyword id="KW-0150">Chloroplast</keyword>
<keyword id="KW-0472">Membrane</keyword>
<keyword id="KW-0602">Photosynthesis</keyword>
<keyword id="KW-0604">Photosystem II</keyword>
<keyword id="KW-0934">Plastid</keyword>
<keyword id="KW-0674">Reaction center</keyword>
<keyword id="KW-0793">Thylakoid</keyword>
<keyword id="KW-0812">Transmembrane</keyword>
<keyword id="KW-1133">Transmembrane helix</keyword>